<name>MOAC_PARXL</name>
<evidence type="ECO:0000255" key="1">
    <source>
        <dbReference type="HAMAP-Rule" id="MF_01224"/>
    </source>
</evidence>
<comment type="function">
    <text evidence="1">Catalyzes the conversion of (8S)-3',8-cyclo-7,8-dihydroguanosine 5'-triphosphate to cyclic pyranopterin monophosphate (cPMP).</text>
</comment>
<comment type="catalytic activity">
    <reaction evidence="1">
        <text>(8S)-3',8-cyclo-7,8-dihydroguanosine 5'-triphosphate = cyclic pyranopterin phosphate + diphosphate</text>
        <dbReference type="Rhea" id="RHEA:49580"/>
        <dbReference type="ChEBI" id="CHEBI:33019"/>
        <dbReference type="ChEBI" id="CHEBI:59648"/>
        <dbReference type="ChEBI" id="CHEBI:131766"/>
        <dbReference type="EC" id="4.6.1.17"/>
    </reaction>
</comment>
<comment type="pathway">
    <text evidence="1">Cofactor biosynthesis; molybdopterin biosynthesis.</text>
</comment>
<comment type="subunit">
    <text evidence="1">Homohexamer; trimer of dimers.</text>
</comment>
<comment type="similarity">
    <text evidence="1">Belongs to the MoaC family.</text>
</comment>
<reference key="1">
    <citation type="journal article" date="2006" name="Proc. Natl. Acad. Sci. U.S.A.">
        <title>Burkholderia xenovorans LB400 harbors a multi-replicon, 9.73-Mbp genome shaped for versatility.</title>
        <authorList>
            <person name="Chain P.S.G."/>
            <person name="Denef V.J."/>
            <person name="Konstantinidis K.T."/>
            <person name="Vergez L.M."/>
            <person name="Agullo L."/>
            <person name="Reyes V.L."/>
            <person name="Hauser L."/>
            <person name="Cordova M."/>
            <person name="Gomez L."/>
            <person name="Gonzalez M."/>
            <person name="Land M."/>
            <person name="Lao V."/>
            <person name="Larimer F."/>
            <person name="LiPuma J.J."/>
            <person name="Mahenthiralingam E."/>
            <person name="Malfatti S.A."/>
            <person name="Marx C.J."/>
            <person name="Parnell J.J."/>
            <person name="Ramette A."/>
            <person name="Richardson P."/>
            <person name="Seeger M."/>
            <person name="Smith D."/>
            <person name="Spilker T."/>
            <person name="Sul W.J."/>
            <person name="Tsoi T.V."/>
            <person name="Ulrich L.E."/>
            <person name="Zhulin I.B."/>
            <person name="Tiedje J.M."/>
        </authorList>
    </citation>
    <scope>NUCLEOTIDE SEQUENCE [LARGE SCALE GENOMIC DNA]</scope>
    <source>
        <strain>LB400</strain>
    </source>
</reference>
<accession>Q13UI4</accession>
<protein>
    <recommendedName>
        <fullName evidence="1">Cyclic pyranopterin monophosphate synthase</fullName>
        <ecNumber evidence="1">4.6.1.17</ecNumber>
    </recommendedName>
    <alternativeName>
        <fullName evidence="1">Molybdenum cofactor biosynthesis protein C</fullName>
    </alternativeName>
</protein>
<gene>
    <name evidence="1" type="primary">moaC</name>
    <name type="ordered locus">Bxeno_A3717</name>
    <name type="ORF">Bxe_A0679</name>
</gene>
<dbReference type="EC" id="4.6.1.17" evidence="1"/>
<dbReference type="EMBL" id="CP000270">
    <property type="protein sequence ID" value="ABE32255.1"/>
    <property type="molecule type" value="Genomic_DNA"/>
</dbReference>
<dbReference type="RefSeq" id="WP_011489748.1">
    <property type="nucleotide sequence ID" value="NC_007951.1"/>
</dbReference>
<dbReference type="SMR" id="Q13UI4"/>
<dbReference type="STRING" id="266265.Bxe_A0679"/>
<dbReference type="KEGG" id="bxb:DR64_2847"/>
<dbReference type="KEGG" id="bxe:Bxe_A0679"/>
<dbReference type="PATRIC" id="fig|266265.5.peg.3926"/>
<dbReference type="eggNOG" id="COG0315">
    <property type="taxonomic scope" value="Bacteria"/>
</dbReference>
<dbReference type="OrthoDB" id="9794429at2"/>
<dbReference type="UniPathway" id="UPA00344"/>
<dbReference type="Proteomes" id="UP000001817">
    <property type="component" value="Chromosome 1"/>
</dbReference>
<dbReference type="GO" id="GO:0061799">
    <property type="term" value="F:cyclic pyranopterin monophosphate synthase activity"/>
    <property type="evidence" value="ECO:0007669"/>
    <property type="project" value="UniProtKB-UniRule"/>
</dbReference>
<dbReference type="GO" id="GO:0006777">
    <property type="term" value="P:Mo-molybdopterin cofactor biosynthetic process"/>
    <property type="evidence" value="ECO:0007669"/>
    <property type="project" value="UniProtKB-UniRule"/>
</dbReference>
<dbReference type="CDD" id="cd01420">
    <property type="entry name" value="MoaC_PE"/>
    <property type="match status" value="1"/>
</dbReference>
<dbReference type="Gene3D" id="3.30.70.640">
    <property type="entry name" value="Molybdopterin cofactor biosynthesis C (MoaC) domain"/>
    <property type="match status" value="1"/>
</dbReference>
<dbReference type="HAMAP" id="MF_01224_B">
    <property type="entry name" value="MoaC_B"/>
    <property type="match status" value="1"/>
</dbReference>
<dbReference type="InterPro" id="IPR023045">
    <property type="entry name" value="MoaC"/>
</dbReference>
<dbReference type="InterPro" id="IPR047594">
    <property type="entry name" value="MoaC_bact/euk"/>
</dbReference>
<dbReference type="InterPro" id="IPR036522">
    <property type="entry name" value="MoaC_sf"/>
</dbReference>
<dbReference type="InterPro" id="IPR050105">
    <property type="entry name" value="MoCo_biosynth_MoaA/MoaC"/>
</dbReference>
<dbReference type="InterPro" id="IPR002820">
    <property type="entry name" value="Mopterin_CF_biosynth-C_dom"/>
</dbReference>
<dbReference type="NCBIfam" id="TIGR00581">
    <property type="entry name" value="moaC"/>
    <property type="match status" value="1"/>
</dbReference>
<dbReference type="NCBIfam" id="NF006870">
    <property type="entry name" value="PRK09364.1"/>
    <property type="match status" value="1"/>
</dbReference>
<dbReference type="PANTHER" id="PTHR22960">
    <property type="entry name" value="MOLYBDOPTERIN COFACTOR SYNTHESIS PROTEIN A"/>
    <property type="match status" value="1"/>
</dbReference>
<dbReference type="Pfam" id="PF01967">
    <property type="entry name" value="MoaC"/>
    <property type="match status" value="1"/>
</dbReference>
<dbReference type="SUPFAM" id="SSF55040">
    <property type="entry name" value="Molybdenum cofactor biosynthesis protein C, MoaC"/>
    <property type="match status" value="1"/>
</dbReference>
<keyword id="KW-0456">Lyase</keyword>
<keyword id="KW-0501">Molybdenum cofactor biosynthesis</keyword>
<keyword id="KW-1185">Reference proteome</keyword>
<organism>
    <name type="scientific">Paraburkholderia xenovorans (strain LB400)</name>
    <dbReference type="NCBI Taxonomy" id="266265"/>
    <lineage>
        <taxon>Bacteria</taxon>
        <taxon>Pseudomonadati</taxon>
        <taxon>Pseudomonadota</taxon>
        <taxon>Betaproteobacteria</taxon>
        <taxon>Burkholderiales</taxon>
        <taxon>Burkholderiaceae</taxon>
        <taxon>Paraburkholderia</taxon>
    </lineage>
</organism>
<sequence>MPELTHFDAAGQAHMVDVGGKQETKRIAVARGSIRMLPETFALIRDGNAKKGDVIGIARIAAIQGSKRTADLIPLCHPLALTRVKVDFELDETLPGVHCTVQVETLGRTGVEMEALTAVQVGLLTVYDMCKAVDRGMTITDVKVLEKHGGKSGDWVAG</sequence>
<proteinExistence type="inferred from homology"/>
<feature type="chain" id="PRO_1000054080" description="Cyclic pyranopterin monophosphate synthase">
    <location>
        <begin position="1"/>
        <end position="158"/>
    </location>
</feature>
<feature type="active site" evidence="1">
    <location>
        <position position="128"/>
    </location>
</feature>
<feature type="binding site" evidence="1">
    <location>
        <begin position="75"/>
        <end position="77"/>
    </location>
    <ligand>
        <name>substrate</name>
    </ligand>
</feature>
<feature type="binding site" evidence="1">
    <location>
        <begin position="113"/>
        <end position="114"/>
    </location>
    <ligand>
        <name>substrate</name>
    </ligand>
</feature>